<keyword id="KW-0067">ATP-binding</keyword>
<keyword id="KW-0119">Carbohydrate metabolism</keyword>
<keyword id="KW-0418">Kinase</keyword>
<keyword id="KW-0479">Metal-binding</keyword>
<keyword id="KW-0547">Nucleotide-binding</keyword>
<keyword id="KW-0808">Transferase</keyword>
<keyword id="KW-0862">Zinc</keyword>
<sequence length="303" mass="32974">MYYGFDIGGTKIALGAFDSTRRLQWEKRVPTPHTSYSAFLDAVCELVAEADQRFGVKGSVGIGIPGMPETEDGTLYAANVPAASGKPLRADLSARLDRDVRLDNDANCFALSEAWDDEFTQYPLVMGLILGTGVGGGLVLNGKPITGQSYITGEFGHMRLPVDALTLMGFDFPLRRCGCGQMGCIENYLSGRGFAWLYQHYYDQSLQAPEIIALWEQGDEQAHAHVERYLDLLAVCLGNILTIVDPDLLVIGGGLSNFTAITTQLAERLPRHLLPVARAPRIERARHGDAGGMRGAAFLHLTD</sequence>
<reference key="1">
    <citation type="journal article" date="2009" name="PLoS ONE">
        <title>Salmonella paratyphi C: genetic divergence from Salmonella choleraesuis and pathogenic convergence with Salmonella typhi.</title>
        <authorList>
            <person name="Liu W.-Q."/>
            <person name="Feng Y."/>
            <person name="Wang Y."/>
            <person name="Zou Q.-H."/>
            <person name="Chen F."/>
            <person name="Guo J.-T."/>
            <person name="Peng Y.-H."/>
            <person name="Jin Y."/>
            <person name="Li Y.-G."/>
            <person name="Hu S.-N."/>
            <person name="Johnston R.N."/>
            <person name="Liu G.-R."/>
            <person name="Liu S.-L."/>
        </authorList>
    </citation>
    <scope>NUCLEOTIDE SEQUENCE [LARGE SCALE GENOMIC DNA]</scope>
    <source>
        <strain>RKS4594</strain>
    </source>
</reference>
<evidence type="ECO:0000255" key="1">
    <source>
        <dbReference type="HAMAP-Rule" id="MF_01271"/>
    </source>
</evidence>
<dbReference type="EC" id="2.7.1.59" evidence="1"/>
<dbReference type="EMBL" id="CP000857">
    <property type="protein sequence ID" value="ACN46630.1"/>
    <property type="molecule type" value="Genomic_DNA"/>
</dbReference>
<dbReference type="RefSeq" id="WP_000291242.1">
    <property type="nucleotide sequence ID" value="NC_012125.1"/>
</dbReference>
<dbReference type="SMR" id="C0Q772"/>
<dbReference type="KEGG" id="sei:SPC_2525"/>
<dbReference type="HOGENOM" id="CLU_036604_0_3_6"/>
<dbReference type="UniPathway" id="UPA00544"/>
<dbReference type="Proteomes" id="UP000001599">
    <property type="component" value="Chromosome"/>
</dbReference>
<dbReference type="GO" id="GO:0005524">
    <property type="term" value="F:ATP binding"/>
    <property type="evidence" value="ECO:0007669"/>
    <property type="project" value="UniProtKB-UniRule"/>
</dbReference>
<dbReference type="GO" id="GO:0045127">
    <property type="term" value="F:N-acetylglucosamine kinase activity"/>
    <property type="evidence" value="ECO:0007669"/>
    <property type="project" value="UniProtKB-UniRule"/>
</dbReference>
<dbReference type="GO" id="GO:0008270">
    <property type="term" value="F:zinc ion binding"/>
    <property type="evidence" value="ECO:0007669"/>
    <property type="project" value="UniProtKB-UniRule"/>
</dbReference>
<dbReference type="GO" id="GO:0006044">
    <property type="term" value="P:N-acetylglucosamine metabolic process"/>
    <property type="evidence" value="ECO:0007669"/>
    <property type="project" value="UniProtKB-UniRule"/>
</dbReference>
<dbReference type="GO" id="GO:0009254">
    <property type="term" value="P:peptidoglycan turnover"/>
    <property type="evidence" value="ECO:0007669"/>
    <property type="project" value="UniProtKB-UniRule"/>
</dbReference>
<dbReference type="CDD" id="cd24057">
    <property type="entry name" value="ASKHA_NBD_ROK_NAGK"/>
    <property type="match status" value="1"/>
</dbReference>
<dbReference type="FunFam" id="3.30.420.40:FF:000049">
    <property type="entry name" value="N-acetyl-D-glucosamine kinase"/>
    <property type="match status" value="1"/>
</dbReference>
<dbReference type="FunFam" id="3.30.420.40:FF:000051">
    <property type="entry name" value="N-acetyl-D-glucosamine kinase"/>
    <property type="match status" value="1"/>
</dbReference>
<dbReference type="Gene3D" id="3.30.420.40">
    <property type="match status" value="2"/>
</dbReference>
<dbReference type="HAMAP" id="MF_01271">
    <property type="entry name" value="GlcNAc_kinase"/>
    <property type="match status" value="1"/>
</dbReference>
<dbReference type="InterPro" id="IPR043129">
    <property type="entry name" value="ATPase_NBD"/>
</dbReference>
<dbReference type="InterPro" id="IPR023505">
    <property type="entry name" value="N-acetyl-D-glucosamine_kinase"/>
</dbReference>
<dbReference type="InterPro" id="IPR000600">
    <property type="entry name" value="ROK"/>
</dbReference>
<dbReference type="InterPro" id="IPR049874">
    <property type="entry name" value="ROK_cs"/>
</dbReference>
<dbReference type="NCBIfam" id="NF009835">
    <property type="entry name" value="PRK13310.1"/>
    <property type="match status" value="1"/>
</dbReference>
<dbReference type="PANTHER" id="PTHR18964:SF162">
    <property type="entry name" value="N-ACETYL-D-GLUCOSAMINE KINASE"/>
    <property type="match status" value="1"/>
</dbReference>
<dbReference type="PANTHER" id="PTHR18964">
    <property type="entry name" value="ROK (REPRESSOR, ORF, KINASE) FAMILY"/>
    <property type="match status" value="1"/>
</dbReference>
<dbReference type="Pfam" id="PF00480">
    <property type="entry name" value="ROK"/>
    <property type="match status" value="1"/>
</dbReference>
<dbReference type="SUPFAM" id="SSF53067">
    <property type="entry name" value="Actin-like ATPase domain"/>
    <property type="match status" value="1"/>
</dbReference>
<dbReference type="PROSITE" id="PS01125">
    <property type="entry name" value="ROK"/>
    <property type="match status" value="1"/>
</dbReference>
<name>NAGK_SALPC</name>
<protein>
    <recommendedName>
        <fullName evidence="1">N-acetyl-D-glucosamine kinase</fullName>
        <ecNumber evidence="1">2.7.1.59</ecNumber>
    </recommendedName>
    <alternativeName>
        <fullName evidence="1">GlcNAc kinase</fullName>
    </alternativeName>
</protein>
<proteinExistence type="inferred from homology"/>
<comment type="function">
    <text evidence="1">Catalyzes the phosphorylation of N-acetyl-D-glucosamine (GlcNAc) derived from cell-wall degradation, yielding GlcNAc-6-P.</text>
</comment>
<comment type="catalytic activity">
    <reaction evidence="1">
        <text>N-acetyl-D-glucosamine + ATP = N-acetyl-D-glucosamine 6-phosphate + ADP + H(+)</text>
        <dbReference type="Rhea" id="RHEA:17417"/>
        <dbReference type="ChEBI" id="CHEBI:15378"/>
        <dbReference type="ChEBI" id="CHEBI:30616"/>
        <dbReference type="ChEBI" id="CHEBI:57513"/>
        <dbReference type="ChEBI" id="CHEBI:456216"/>
        <dbReference type="ChEBI" id="CHEBI:506227"/>
        <dbReference type="EC" id="2.7.1.59"/>
    </reaction>
</comment>
<comment type="pathway">
    <text evidence="1">Cell wall biogenesis; peptidoglycan recycling.</text>
</comment>
<comment type="similarity">
    <text evidence="1">Belongs to the ROK (NagC/XylR) family. NagK subfamily.</text>
</comment>
<accession>C0Q772</accession>
<feature type="chain" id="PRO_1000165175" description="N-acetyl-D-glucosamine kinase">
    <location>
        <begin position="1"/>
        <end position="303"/>
    </location>
</feature>
<feature type="binding site" evidence="1">
    <location>
        <begin position="4"/>
        <end position="11"/>
    </location>
    <ligand>
        <name>ATP</name>
        <dbReference type="ChEBI" id="CHEBI:30616"/>
    </ligand>
</feature>
<feature type="binding site" evidence="1">
    <location>
        <begin position="133"/>
        <end position="140"/>
    </location>
    <ligand>
        <name>ATP</name>
        <dbReference type="ChEBI" id="CHEBI:30616"/>
    </ligand>
</feature>
<feature type="binding site" evidence="1">
    <location>
        <position position="157"/>
    </location>
    <ligand>
        <name>Zn(2+)</name>
        <dbReference type="ChEBI" id="CHEBI:29105"/>
    </ligand>
</feature>
<feature type="binding site" evidence="1">
    <location>
        <position position="177"/>
    </location>
    <ligand>
        <name>Zn(2+)</name>
        <dbReference type="ChEBI" id="CHEBI:29105"/>
    </ligand>
</feature>
<feature type="binding site" evidence="1">
    <location>
        <position position="179"/>
    </location>
    <ligand>
        <name>Zn(2+)</name>
        <dbReference type="ChEBI" id="CHEBI:29105"/>
    </ligand>
</feature>
<feature type="binding site" evidence="1">
    <location>
        <position position="184"/>
    </location>
    <ligand>
        <name>Zn(2+)</name>
        <dbReference type="ChEBI" id="CHEBI:29105"/>
    </ligand>
</feature>
<organism>
    <name type="scientific">Salmonella paratyphi C (strain RKS4594)</name>
    <dbReference type="NCBI Taxonomy" id="476213"/>
    <lineage>
        <taxon>Bacteria</taxon>
        <taxon>Pseudomonadati</taxon>
        <taxon>Pseudomonadota</taxon>
        <taxon>Gammaproteobacteria</taxon>
        <taxon>Enterobacterales</taxon>
        <taxon>Enterobacteriaceae</taxon>
        <taxon>Salmonella</taxon>
    </lineage>
</organism>
<gene>
    <name evidence="1" type="primary">nagK</name>
    <name type="ordered locus">SPC_2525</name>
</gene>